<organism>
    <name type="scientific">Chlorobium chlorochromatii (strain CaD3)</name>
    <dbReference type="NCBI Taxonomy" id="340177"/>
    <lineage>
        <taxon>Bacteria</taxon>
        <taxon>Pseudomonadati</taxon>
        <taxon>Chlorobiota</taxon>
        <taxon>Chlorobiia</taxon>
        <taxon>Chlorobiales</taxon>
        <taxon>Chlorobiaceae</taxon>
        <taxon>Chlorobium/Pelodictyon group</taxon>
        <taxon>Chlorobium</taxon>
    </lineage>
</organism>
<protein>
    <recommendedName>
        <fullName evidence="1">Large-conductance mechanosensitive channel</fullName>
    </recommendedName>
</protein>
<gene>
    <name evidence="1" type="primary">mscL</name>
    <name type="ordered locus">Cag_0025</name>
</gene>
<keyword id="KW-0997">Cell inner membrane</keyword>
<keyword id="KW-1003">Cell membrane</keyword>
<keyword id="KW-0407">Ion channel</keyword>
<keyword id="KW-0406">Ion transport</keyword>
<keyword id="KW-0472">Membrane</keyword>
<keyword id="KW-0812">Transmembrane</keyword>
<keyword id="KW-1133">Transmembrane helix</keyword>
<keyword id="KW-0813">Transport</keyword>
<evidence type="ECO:0000255" key="1">
    <source>
        <dbReference type="HAMAP-Rule" id="MF_00115"/>
    </source>
</evidence>
<dbReference type="EMBL" id="CP000108">
    <property type="protein sequence ID" value="ABB27304.1"/>
    <property type="molecule type" value="Genomic_DNA"/>
</dbReference>
<dbReference type="STRING" id="340177.Cag_0025"/>
<dbReference type="KEGG" id="cch:Cag_0025"/>
<dbReference type="eggNOG" id="COG1970">
    <property type="taxonomic scope" value="Bacteria"/>
</dbReference>
<dbReference type="HOGENOM" id="CLU_095787_2_3_10"/>
<dbReference type="OrthoDB" id="9810350at2"/>
<dbReference type="GO" id="GO:0005886">
    <property type="term" value="C:plasma membrane"/>
    <property type="evidence" value="ECO:0007669"/>
    <property type="project" value="UniProtKB-SubCell"/>
</dbReference>
<dbReference type="GO" id="GO:0008381">
    <property type="term" value="F:mechanosensitive monoatomic ion channel activity"/>
    <property type="evidence" value="ECO:0007669"/>
    <property type="project" value="UniProtKB-UniRule"/>
</dbReference>
<dbReference type="Gene3D" id="1.10.1200.120">
    <property type="entry name" value="Large-conductance mechanosensitive channel, MscL, domain 1"/>
    <property type="match status" value="1"/>
</dbReference>
<dbReference type="HAMAP" id="MF_00115">
    <property type="entry name" value="MscL"/>
    <property type="match status" value="1"/>
</dbReference>
<dbReference type="InterPro" id="IPR019823">
    <property type="entry name" value="Mechanosensitive_channel_CS"/>
</dbReference>
<dbReference type="InterPro" id="IPR001185">
    <property type="entry name" value="MS_channel"/>
</dbReference>
<dbReference type="InterPro" id="IPR037673">
    <property type="entry name" value="MSC/AndL"/>
</dbReference>
<dbReference type="InterPro" id="IPR036019">
    <property type="entry name" value="MscL_channel"/>
</dbReference>
<dbReference type="NCBIfam" id="TIGR00220">
    <property type="entry name" value="mscL"/>
    <property type="match status" value="1"/>
</dbReference>
<dbReference type="NCBIfam" id="NF001843">
    <property type="entry name" value="PRK00567.1-4"/>
    <property type="match status" value="1"/>
</dbReference>
<dbReference type="PANTHER" id="PTHR30266:SF2">
    <property type="entry name" value="LARGE-CONDUCTANCE MECHANOSENSITIVE CHANNEL"/>
    <property type="match status" value="1"/>
</dbReference>
<dbReference type="PANTHER" id="PTHR30266">
    <property type="entry name" value="MECHANOSENSITIVE CHANNEL MSCL"/>
    <property type="match status" value="1"/>
</dbReference>
<dbReference type="Pfam" id="PF01741">
    <property type="entry name" value="MscL"/>
    <property type="match status" value="1"/>
</dbReference>
<dbReference type="PRINTS" id="PR01264">
    <property type="entry name" value="MECHCHANNEL"/>
</dbReference>
<dbReference type="SUPFAM" id="SSF81330">
    <property type="entry name" value="Gated mechanosensitive channel"/>
    <property type="match status" value="1"/>
</dbReference>
<dbReference type="PROSITE" id="PS01327">
    <property type="entry name" value="MSCL"/>
    <property type="match status" value="1"/>
</dbReference>
<comment type="function">
    <text evidence="1">Channel that opens in response to stretch forces in the membrane lipid bilayer. May participate in the regulation of osmotic pressure changes within the cell.</text>
</comment>
<comment type="subunit">
    <text evidence="1">Homopentamer.</text>
</comment>
<comment type="subcellular location">
    <subcellularLocation>
        <location evidence="1">Cell inner membrane</location>
        <topology evidence="1">Multi-pass membrane protein</topology>
    </subcellularLocation>
</comment>
<comment type="similarity">
    <text evidence="1">Belongs to the MscL family.</text>
</comment>
<proteinExistence type="inferred from homology"/>
<accession>Q3ANR9</accession>
<reference key="1">
    <citation type="submission" date="2005-08" db="EMBL/GenBank/DDBJ databases">
        <title>Complete sequence of Chlorobium chlorochromatii CaD3.</title>
        <authorList>
            <consortium name="US DOE Joint Genome Institute"/>
            <person name="Copeland A."/>
            <person name="Lucas S."/>
            <person name="Lapidus A."/>
            <person name="Barry K."/>
            <person name="Detter J.C."/>
            <person name="Glavina T."/>
            <person name="Hammon N."/>
            <person name="Israni S."/>
            <person name="Pitluck S."/>
            <person name="Bryant D."/>
            <person name="Schmutz J."/>
            <person name="Larimer F."/>
            <person name="Land M."/>
            <person name="Kyrpides N."/>
            <person name="Ivanova N."/>
            <person name="Richardson P."/>
        </authorList>
    </citation>
    <scope>NUCLEOTIDE SEQUENCE [LARGE SCALE GENOMIC DNA]</scope>
    <source>
        <strain>CaD3</strain>
    </source>
</reference>
<feature type="chain" id="PRO_0000237992" description="Large-conductance mechanosensitive channel">
    <location>
        <begin position="1"/>
        <end position="155"/>
    </location>
</feature>
<feature type="transmembrane region" description="Helical" evidence="1">
    <location>
        <begin position="16"/>
        <end position="36"/>
    </location>
</feature>
<feature type="transmembrane region" description="Helical" evidence="1">
    <location>
        <begin position="40"/>
        <end position="60"/>
    </location>
</feature>
<feature type="transmembrane region" description="Helical" evidence="1">
    <location>
        <begin position="88"/>
        <end position="108"/>
    </location>
</feature>
<name>MSCL_CHLCH</name>
<sequence>MSVMKEFKEFAVKGNVVDMAVGIIIGGAFGAIVNNLVSQVILPPLGLLIGGVDFSSLYIILKEGATQAAPYNSLAEATAAGAVTLNYGVFLNSVFSFVIMAFAVFLLVKSINMLRRTEGSKSAVPAPSTTKECPYCLSSVPLKATRCPQCTSELK</sequence>